<protein>
    <recommendedName>
        <fullName evidence="1">23S rRNA (uracil(1939)-C(5))-methyltransferase RlmD</fullName>
        <ecNumber evidence="1">2.1.1.190</ecNumber>
    </recommendedName>
    <alternativeName>
        <fullName evidence="1">23S rRNA(m5U1939)-methyltransferase</fullName>
    </alternativeName>
</protein>
<feature type="chain" id="PRO_0000161902" description="23S rRNA (uracil(1939)-C(5))-methyltransferase RlmD">
    <location>
        <begin position="1"/>
        <end position="440"/>
    </location>
</feature>
<feature type="domain" description="TRAM" evidence="1">
    <location>
        <begin position="8"/>
        <end position="69"/>
    </location>
</feature>
<feature type="active site" description="Nucleophile" evidence="1">
    <location>
        <position position="396"/>
    </location>
</feature>
<feature type="binding site" evidence="1">
    <location>
        <position position="82"/>
    </location>
    <ligand>
        <name>[4Fe-4S] cluster</name>
        <dbReference type="ChEBI" id="CHEBI:49883"/>
    </ligand>
</feature>
<feature type="binding site" evidence="1">
    <location>
        <position position="88"/>
    </location>
    <ligand>
        <name>[4Fe-4S] cluster</name>
        <dbReference type="ChEBI" id="CHEBI:49883"/>
    </ligand>
</feature>
<feature type="binding site" evidence="1">
    <location>
        <position position="91"/>
    </location>
    <ligand>
        <name>[4Fe-4S] cluster</name>
        <dbReference type="ChEBI" id="CHEBI:49883"/>
    </ligand>
</feature>
<feature type="binding site" evidence="1">
    <location>
        <position position="169"/>
    </location>
    <ligand>
        <name>[4Fe-4S] cluster</name>
        <dbReference type="ChEBI" id="CHEBI:49883"/>
    </ligand>
</feature>
<feature type="binding site" evidence="1">
    <location>
        <position position="272"/>
    </location>
    <ligand>
        <name>S-adenosyl-L-methionine</name>
        <dbReference type="ChEBI" id="CHEBI:59789"/>
    </ligand>
</feature>
<feature type="binding site" evidence="1">
    <location>
        <position position="301"/>
    </location>
    <ligand>
        <name>S-adenosyl-L-methionine</name>
        <dbReference type="ChEBI" id="CHEBI:59789"/>
    </ligand>
</feature>
<feature type="binding site" evidence="1">
    <location>
        <position position="306"/>
    </location>
    <ligand>
        <name>S-adenosyl-L-methionine</name>
        <dbReference type="ChEBI" id="CHEBI:59789"/>
    </ligand>
</feature>
<feature type="binding site" evidence="1">
    <location>
        <position position="322"/>
    </location>
    <ligand>
        <name>S-adenosyl-L-methionine</name>
        <dbReference type="ChEBI" id="CHEBI:59789"/>
    </ligand>
</feature>
<feature type="binding site" evidence="1">
    <location>
        <position position="349"/>
    </location>
    <ligand>
        <name>S-adenosyl-L-methionine</name>
        <dbReference type="ChEBI" id="CHEBI:59789"/>
    </ligand>
</feature>
<feature type="binding site" evidence="1">
    <location>
        <position position="370"/>
    </location>
    <ligand>
        <name>S-adenosyl-L-methionine</name>
        <dbReference type="ChEBI" id="CHEBI:59789"/>
    </ligand>
</feature>
<gene>
    <name evidence="1" type="primary">rlmD</name>
    <name type="synonym">rumA</name>
    <name type="ordered locus">MS0240</name>
</gene>
<proteinExistence type="inferred from homology"/>
<organism>
    <name type="scientific">Mannheimia succiniciproducens (strain KCTC 0769BP / MBEL55E)</name>
    <dbReference type="NCBI Taxonomy" id="221988"/>
    <lineage>
        <taxon>Bacteria</taxon>
        <taxon>Pseudomonadati</taxon>
        <taxon>Pseudomonadota</taxon>
        <taxon>Gammaproteobacteria</taxon>
        <taxon>Pasteurellales</taxon>
        <taxon>Pasteurellaceae</taxon>
        <taxon>Basfia</taxon>
    </lineage>
</organism>
<evidence type="ECO:0000255" key="1">
    <source>
        <dbReference type="HAMAP-Rule" id="MF_01010"/>
    </source>
</evidence>
<sequence length="440" mass="50336">MVLLYTPPQKINKLQREMEVEILDLDYQGLGVAKIQGKTWFVENALPGEKVRIKIKEEKRQFGLATTKKILEASAQRQTPKCQYASRCGGCQNQHIPVEMQREAKQKALFRRLLKLQPEGIEFMPMIVGEAFGYRRRVRLSMLFDGKLKRLEIGFRQKNSAQIVHIEQCEVIEPALNKILSKLTALLSRFSQPKNLGHIELVAADNGVAMLLRYSGKLTENDRTLLLDFAVREELMLFLQDDEKTEQIYGQPPFYQLADNLQLQFDIRDFIQVNSLLNQRMITAALDWLDVQKQDHVLDLFCGMGNFTLPLSRRVKSAVGIEGISAMVEKAKANAERNQCQNVQFYRADLDQNFADEVWATEPFNKILLDPPRTGAAFALNALCRLKAEKILYVSCNPATLVRDAEILLNSDYRVKKVAMIDMFPHTGHLESITLFEKQS</sequence>
<accession>Q65W13</accession>
<dbReference type="EC" id="2.1.1.190" evidence="1"/>
<dbReference type="EMBL" id="AE016827">
    <property type="protein sequence ID" value="AAU36847.1"/>
    <property type="molecule type" value="Genomic_DNA"/>
</dbReference>
<dbReference type="RefSeq" id="WP_011199422.1">
    <property type="nucleotide sequence ID" value="NC_006300.1"/>
</dbReference>
<dbReference type="SMR" id="Q65W13"/>
<dbReference type="STRING" id="221988.MS0240"/>
<dbReference type="KEGG" id="msu:MS0240"/>
<dbReference type="eggNOG" id="COG2265">
    <property type="taxonomic scope" value="Bacteria"/>
</dbReference>
<dbReference type="HOGENOM" id="CLU_014689_8_2_6"/>
<dbReference type="OrthoDB" id="9804590at2"/>
<dbReference type="Proteomes" id="UP000000607">
    <property type="component" value="Chromosome"/>
</dbReference>
<dbReference type="GO" id="GO:0051539">
    <property type="term" value="F:4 iron, 4 sulfur cluster binding"/>
    <property type="evidence" value="ECO:0007669"/>
    <property type="project" value="UniProtKB-KW"/>
</dbReference>
<dbReference type="GO" id="GO:0005506">
    <property type="term" value="F:iron ion binding"/>
    <property type="evidence" value="ECO:0007669"/>
    <property type="project" value="UniProtKB-UniRule"/>
</dbReference>
<dbReference type="GO" id="GO:0003723">
    <property type="term" value="F:RNA binding"/>
    <property type="evidence" value="ECO:0007669"/>
    <property type="project" value="InterPro"/>
</dbReference>
<dbReference type="GO" id="GO:0070041">
    <property type="term" value="F:rRNA (uridine-C5-)-methyltransferase activity"/>
    <property type="evidence" value="ECO:0007669"/>
    <property type="project" value="UniProtKB-UniRule"/>
</dbReference>
<dbReference type="GO" id="GO:0070475">
    <property type="term" value="P:rRNA base methylation"/>
    <property type="evidence" value="ECO:0007669"/>
    <property type="project" value="TreeGrafter"/>
</dbReference>
<dbReference type="CDD" id="cd02440">
    <property type="entry name" value="AdoMet_MTases"/>
    <property type="match status" value="1"/>
</dbReference>
<dbReference type="FunFam" id="3.40.50.150:FF:000009">
    <property type="entry name" value="23S rRNA (Uracil(1939)-C(5))-methyltransferase RlmD"/>
    <property type="match status" value="1"/>
</dbReference>
<dbReference type="FunFam" id="2.40.50.140:FF:000097">
    <property type="entry name" value="23S rRNA (uracil(1939)-C(5))-methyltransferase RlmD"/>
    <property type="match status" value="1"/>
</dbReference>
<dbReference type="Gene3D" id="2.40.50.1070">
    <property type="match status" value="1"/>
</dbReference>
<dbReference type="Gene3D" id="2.40.50.140">
    <property type="entry name" value="Nucleic acid-binding proteins"/>
    <property type="match status" value="1"/>
</dbReference>
<dbReference type="Gene3D" id="3.40.50.150">
    <property type="entry name" value="Vaccinia Virus protein VP39"/>
    <property type="match status" value="1"/>
</dbReference>
<dbReference type="HAMAP" id="MF_01010">
    <property type="entry name" value="23SrRNA_methyltr_RlmD"/>
    <property type="match status" value="1"/>
</dbReference>
<dbReference type="InterPro" id="IPR001566">
    <property type="entry name" value="23S_rRNA_MeTrfase_RlmD"/>
</dbReference>
<dbReference type="InterPro" id="IPR030390">
    <property type="entry name" value="MeTrfase_TrmA_AS"/>
</dbReference>
<dbReference type="InterPro" id="IPR030391">
    <property type="entry name" value="MeTrfase_TrmA_CS"/>
</dbReference>
<dbReference type="InterPro" id="IPR012340">
    <property type="entry name" value="NA-bd_OB-fold"/>
</dbReference>
<dbReference type="InterPro" id="IPR029063">
    <property type="entry name" value="SAM-dependent_MTases_sf"/>
</dbReference>
<dbReference type="InterPro" id="IPR002792">
    <property type="entry name" value="TRAM_dom"/>
</dbReference>
<dbReference type="InterPro" id="IPR010280">
    <property type="entry name" value="U5_MeTrfase_fam"/>
</dbReference>
<dbReference type="NCBIfam" id="NF009639">
    <property type="entry name" value="PRK13168.1"/>
    <property type="match status" value="1"/>
</dbReference>
<dbReference type="NCBIfam" id="TIGR00479">
    <property type="entry name" value="rumA"/>
    <property type="match status" value="1"/>
</dbReference>
<dbReference type="PANTHER" id="PTHR11061:SF49">
    <property type="entry name" value="23S RRNA (URACIL(1939)-C(5))-METHYLTRANSFERASE RLMD"/>
    <property type="match status" value="1"/>
</dbReference>
<dbReference type="PANTHER" id="PTHR11061">
    <property type="entry name" value="RNA M5U METHYLTRANSFERASE"/>
    <property type="match status" value="1"/>
</dbReference>
<dbReference type="Pfam" id="PF01938">
    <property type="entry name" value="TRAM"/>
    <property type="match status" value="1"/>
</dbReference>
<dbReference type="Pfam" id="PF05958">
    <property type="entry name" value="tRNA_U5-meth_tr"/>
    <property type="match status" value="1"/>
</dbReference>
<dbReference type="SUPFAM" id="SSF50249">
    <property type="entry name" value="Nucleic acid-binding proteins"/>
    <property type="match status" value="1"/>
</dbReference>
<dbReference type="SUPFAM" id="SSF53335">
    <property type="entry name" value="S-adenosyl-L-methionine-dependent methyltransferases"/>
    <property type="match status" value="1"/>
</dbReference>
<dbReference type="PROSITE" id="PS51687">
    <property type="entry name" value="SAM_MT_RNA_M5U"/>
    <property type="match status" value="1"/>
</dbReference>
<dbReference type="PROSITE" id="PS50926">
    <property type="entry name" value="TRAM"/>
    <property type="match status" value="1"/>
</dbReference>
<dbReference type="PROSITE" id="PS01230">
    <property type="entry name" value="TRMA_1"/>
    <property type="match status" value="1"/>
</dbReference>
<dbReference type="PROSITE" id="PS01231">
    <property type="entry name" value="TRMA_2"/>
    <property type="match status" value="1"/>
</dbReference>
<keyword id="KW-0004">4Fe-4S</keyword>
<keyword id="KW-0408">Iron</keyword>
<keyword id="KW-0411">Iron-sulfur</keyword>
<keyword id="KW-0479">Metal-binding</keyword>
<keyword id="KW-0489">Methyltransferase</keyword>
<keyword id="KW-0698">rRNA processing</keyword>
<keyword id="KW-0949">S-adenosyl-L-methionine</keyword>
<keyword id="KW-0808">Transferase</keyword>
<name>RLMD_MANSM</name>
<comment type="function">
    <text evidence="1">Catalyzes the formation of 5-methyl-uridine at position 1939 (m5U1939) in 23S rRNA.</text>
</comment>
<comment type="catalytic activity">
    <reaction evidence="1">
        <text>uridine(1939) in 23S rRNA + S-adenosyl-L-methionine = 5-methyluridine(1939) in 23S rRNA + S-adenosyl-L-homocysteine + H(+)</text>
        <dbReference type="Rhea" id="RHEA:42908"/>
        <dbReference type="Rhea" id="RHEA-COMP:10278"/>
        <dbReference type="Rhea" id="RHEA-COMP:10279"/>
        <dbReference type="ChEBI" id="CHEBI:15378"/>
        <dbReference type="ChEBI" id="CHEBI:57856"/>
        <dbReference type="ChEBI" id="CHEBI:59789"/>
        <dbReference type="ChEBI" id="CHEBI:65315"/>
        <dbReference type="ChEBI" id="CHEBI:74447"/>
        <dbReference type="EC" id="2.1.1.190"/>
    </reaction>
</comment>
<comment type="similarity">
    <text evidence="1">Belongs to the class I-like SAM-binding methyltransferase superfamily. RNA M5U methyltransferase family. RlmD subfamily.</text>
</comment>
<reference key="1">
    <citation type="journal article" date="2004" name="Nat. Biotechnol.">
        <title>The genome sequence of the capnophilic rumen bacterium Mannheimia succiniciproducens.</title>
        <authorList>
            <person name="Hong S.H."/>
            <person name="Kim J.S."/>
            <person name="Lee S.Y."/>
            <person name="In Y.H."/>
            <person name="Choi S.S."/>
            <person name="Rih J.-K."/>
            <person name="Kim C.H."/>
            <person name="Jeong H."/>
            <person name="Hur C.G."/>
            <person name="Kim J.J."/>
        </authorList>
    </citation>
    <scope>NUCLEOTIDE SEQUENCE [LARGE SCALE GENOMIC DNA]</scope>
    <source>
        <strain>KCTC 0769BP / MBEL55E</strain>
    </source>
</reference>